<proteinExistence type="inferred from homology"/>
<evidence type="ECO:0000255" key="1">
    <source>
        <dbReference type="HAMAP-Rule" id="MF_00736"/>
    </source>
</evidence>
<evidence type="ECO:0000305" key="2"/>
<dbReference type="EMBL" id="AE002098">
    <property type="protein sequence ID" value="AAF40586.1"/>
    <property type="molecule type" value="Genomic_DNA"/>
</dbReference>
<dbReference type="PIR" id="D81235">
    <property type="entry name" value="D81235"/>
</dbReference>
<dbReference type="RefSeq" id="NP_273185.1">
    <property type="nucleotide sequence ID" value="NC_003112.2"/>
</dbReference>
<dbReference type="RefSeq" id="WP_002218414.1">
    <property type="nucleotide sequence ID" value="NC_003112.2"/>
</dbReference>
<dbReference type="SMR" id="Q9K1J3"/>
<dbReference type="FunCoup" id="Q9K1J3">
    <property type="interactions" value="586"/>
</dbReference>
<dbReference type="STRING" id="122586.NMB0127"/>
<dbReference type="PaxDb" id="122586-NMB0127"/>
<dbReference type="KEGG" id="nme:NMB0127"/>
<dbReference type="PATRIC" id="fig|122586.8.peg.167"/>
<dbReference type="HOGENOM" id="CLU_074237_2_0_4"/>
<dbReference type="InParanoid" id="Q9K1J3"/>
<dbReference type="OrthoDB" id="9802408at2"/>
<dbReference type="Proteomes" id="UP000000425">
    <property type="component" value="Chromosome"/>
</dbReference>
<dbReference type="GO" id="GO:0022625">
    <property type="term" value="C:cytosolic large ribosomal subunit"/>
    <property type="evidence" value="ECO:0000318"/>
    <property type="project" value="GO_Central"/>
</dbReference>
<dbReference type="GO" id="GO:0070180">
    <property type="term" value="F:large ribosomal subunit rRNA binding"/>
    <property type="evidence" value="ECO:0000318"/>
    <property type="project" value="GO_Central"/>
</dbReference>
<dbReference type="GO" id="GO:0003735">
    <property type="term" value="F:structural constituent of ribosome"/>
    <property type="evidence" value="ECO:0000318"/>
    <property type="project" value="GO_Central"/>
</dbReference>
<dbReference type="GO" id="GO:0006412">
    <property type="term" value="P:translation"/>
    <property type="evidence" value="ECO:0000318"/>
    <property type="project" value="GO_Central"/>
</dbReference>
<dbReference type="CDD" id="cd00349">
    <property type="entry name" value="Ribosomal_L11"/>
    <property type="match status" value="1"/>
</dbReference>
<dbReference type="FunFam" id="1.10.10.250:FF:000001">
    <property type="entry name" value="50S ribosomal protein L11"/>
    <property type="match status" value="1"/>
</dbReference>
<dbReference type="FunFam" id="3.30.1550.10:FF:000001">
    <property type="entry name" value="50S ribosomal protein L11"/>
    <property type="match status" value="1"/>
</dbReference>
<dbReference type="Gene3D" id="1.10.10.250">
    <property type="entry name" value="Ribosomal protein L11, C-terminal domain"/>
    <property type="match status" value="1"/>
</dbReference>
<dbReference type="Gene3D" id="3.30.1550.10">
    <property type="entry name" value="Ribosomal protein L11/L12, N-terminal domain"/>
    <property type="match status" value="1"/>
</dbReference>
<dbReference type="HAMAP" id="MF_00736">
    <property type="entry name" value="Ribosomal_uL11"/>
    <property type="match status" value="1"/>
</dbReference>
<dbReference type="InterPro" id="IPR000911">
    <property type="entry name" value="Ribosomal_uL11"/>
</dbReference>
<dbReference type="InterPro" id="IPR006519">
    <property type="entry name" value="Ribosomal_uL11_bac-typ"/>
</dbReference>
<dbReference type="InterPro" id="IPR020783">
    <property type="entry name" value="Ribosomal_uL11_C"/>
</dbReference>
<dbReference type="InterPro" id="IPR036769">
    <property type="entry name" value="Ribosomal_uL11_C_sf"/>
</dbReference>
<dbReference type="InterPro" id="IPR020785">
    <property type="entry name" value="Ribosomal_uL11_CS"/>
</dbReference>
<dbReference type="InterPro" id="IPR020784">
    <property type="entry name" value="Ribosomal_uL11_N"/>
</dbReference>
<dbReference type="InterPro" id="IPR036796">
    <property type="entry name" value="Ribosomal_uL11_N_sf"/>
</dbReference>
<dbReference type="NCBIfam" id="TIGR01632">
    <property type="entry name" value="L11_bact"/>
    <property type="match status" value="1"/>
</dbReference>
<dbReference type="PANTHER" id="PTHR11661">
    <property type="entry name" value="60S RIBOSOMAL PROTEIN L12"/>
    <property type="match status" value="1"/>
</dbReference>
<dbReference type="PANTHER" id="PTHR11661:SF1">
    <property type="entry name" value="LARGE RIBOSOMAL SUBUNIT PROTEIN UL11M"/>
    <property type="match status" value="1"/>
</dbReference>
<dbReference type="Pfam" id="PF00298">
    <property type="entry name" value="Ribosomal_L11"/>
    <property type="match status" value="1"/>
</dbReference>
<dbReference type="Pfam" id="PF03946">
    <property type="entry name" value="Ribosomal_L11_N"/>
    <property type="match status" value="1"/>
</dbReference>
<dbReference type="SMART" id="SM00649">
    <property type="entry name" value="RL11"/>
    <property type="match status" value="1"/>
</dbReference>
<dbReference type="SUPFAM" id="SSF54747">
    <property type="entry name" value="Ribosomal L11/L12e N-terminal domain"/>
    <property type="match status" value="1"/>
</dbReference>
<dbReference type="SUPFAM" id="SSF46906">
    <property type="entry name" value="Ribosomal protein L11, C-terminal domain"/>
    <property type="match status" value="1"/>
</dbReference>
<dbReference type="PROSITE" id="PS00359">
    <property type="entry name" value="RIBOSOMAL_L11"/>
    <property type="match status" value="1"/>
</dbReference>
<organism>
    <name type="scientific">Neisseria meningitidis serogroup B (strain ATCC BAA-335 / MC58)</name>
    <dbReference type="NCBI Taxonomy" id="122586"/>
    <lineage>
        <taxon>Bacteria</taxon>
        <taxon>Pseudomonadati</taxon>
        <taxon>Pseudomonadota</taxon>
        <taxon>Betaproteobacteria</taxon>
        <taxon>Neisseriales</taxon>
        <taxon>Neisseriaceae</taxon>
        <taxon>Neisseria</taxon>
    </lineage>
</organism>
<name>RL11_NEIMB</name>
<protein>
    <recommendedName>
        <fullName evidence="1">Large ribosomal subunit protein uL11</fullName>
    </recommendedName>
    <alternativeName>
        <fullName evidence="2">50S ribosomal protein L11</fullName>
    </alternativeName>
</protein>
<sequence>MAKKIIGYIKLQIPAGKANPSPPVGPALGQRGLNIMEFCKAFNAATQGMEPGLPIPVVITAFADKSFTFVMKTPPASILLKKAAGLQKGSSNPLTNKVGKLTRAQLEEIAKTKDPDLTAADLDAAVRTIAGSARSMGLDVEGVV</sequence>
<feature type="chain" id="PRO_0000104327" description="Large ribosomal subunit protein uL11">
    <location>
        <begin position="1"/>
        <end position="144"/>
    </location>
</feature>
<accession>Q9K1J3</accession>
<comment type="function">
    <text evidence="1">Forms part of the ribosomal stalk which helps the ribosome interact with GTP-bound translation factors.</text>
</comment>
<comment type="subunit">
    <text evidence="1">Part of the ribosomal stalk of the 50S ribosomal subunit. Interacts with L10 and the large rRNA to form the base of the stalk. L10 forms an elongated spine to which L12 dimers bind in a sequential fashion forming a multimeric L10(L12)X complex.</text>
</comment>
<comment type="PTM">
    <text evidence="1">One or more lysine residues are methylated.</text>
</comment>
<comment type="similarity">
    <text evidence="1">Belongs to the universal ribosomal protein uL11 family.</text>
</comment>
<gene>
    <name evidence="1" type="primary">rplK</name>
    <name type="ordered locus">NMB0127</name>
</gene>
<reference key="1">
    <citation type="journal article" date="2000" name="Science">
        <title>Complete genome sequence of Neisseria meningitidis serogroup B strain MC58.</title>
        <authorList>
            <person name="Tettelin H."/>
            <person name="Saunders N.J."/>
            <person name="Heidelberg J.F."/>
            <person name="Jeffries A.C."/>
            <person name="Nelson K.E."/>
            <person name="Eisen J.A."/>
            <person name="Ketchum K.A."/>
            <person name="Hood D.W."/>
            <person name="Peden J.F."/>
            <person name="Dodson R.J."/>
            <person name="Nelson W.C."/>
            <person name="Gwinn M.L."/>
            <person name="DeBoy R.T."/>
            <person name="Peterson J.D."/>
            <person name="Hickey E.K."/>
            <person name="Haft D.H."/>
            <person name="Salzberg S.L."/>
            <person name="White O."/>
            <person name="Fleischmann R.D."/>
            <person name="Dougherty B.A."/>
            <person name="Mason T.M."/>
            <person name="Ciecko A."/>
            <person name="Parksey D.S."/>
            <person name="Blair E."/>
            <person name="Cittone H."/>
            <person name="Clark E.B."/>
            <person name="Cotton M.D."/>
            <person name="Utterback T.R."/>
            <person name="Khouri H.M."/>
            <person name="Qin H."/>
            <person name="Vamathevan J.J."/>
            <person name="Gill J."/>
            <person name="Scarlato V."/>
            <person name="Masignani V."/>
            <person name="Pizza M."/>
            <person name="Grandi G."/>
            <person name="Sun L."/>
            <person name="Smith H.O."/>
            <person name="Fraser C.M."/>
            <person name="Moxon E.R."/>
            <person name="Rappuoli R."/>
            <person name="Venter J.C."/>
        </authorList>
    </citation>
    <scope>NUCLEOTIDE SEQUENCE [LARGE SCALE GENOMIC DNA]</scope>
    <source>
        <strain>ATCC BAA-335 / MC58</strain>
    </source>
</reference>
<keyword id="KW-0488">Methylation</keyword>
<keyword id="KW-1185">Reference proteome</keyword>
<keyword id="KW-0687">Ribonucleoprotein</keyword>
<keyword id="KW-0689">Ribosomal protein</keyword>
<keyword id="KW-0694">RNA-binding</keyword>
<keyword id="KW-0699">rRNA-binding</keyword>